<comment type="function">
    <text evidence="3">Exhibits trypsin-like activity as defined by cleavage of synthetic substrates with Arg or Lys as the P1 site (By similarity). Involved in the terminal differentiation of keratinocytes through prostasin (PRSS8) activation and filaggrin (FLG) processing (By similarity). Proteolytically cleaves and therefore activates TMPRSS13 (By similarity).</text>
</comment>
<comment type="catalytic activity">
    <reaction>
        <text>Cleaves various synthetic substrates with Arg or Lys at the P1 position and prefers small side-chain amino acids, such as Ala and Gly, at the P2 position.</text>
        <dbReference type="EC" id="3.4.21.109"/>
    </reaction>
</comment>
<comment type="subunit">
    <text evidence="1">Interacts with CDCP1. May interact with TMEFF1 (By similarity).</text>
</comment>
<comment type="subcellular location">
    <subcellularLocation>
        <location evidence="10">Membrane</location>
        <topology evidence="4">Single-pass type II membrane protein</topology>
    </subcellularLocation>
</comment>
<comment type="similarity">
    <text evidence="8">Belongs to the peptidase S1 family.</text>
</comment>
<proteinExistence type="evidence at transcript level"/>
<evidence type="ECO:0000250" key="1"/>
<evidence type="ECO:0000250" key="2">
    <source>
        <dbReference type="UniProtKB" id="P56677"/>
    </source>
</evidence>
<evidence type="ECO:0000250" key="3">
    <source>
        <dbReference type="UniProtKB" id="Q9Y5Y6"/>
    </source>
</evidence>
<evidence type="ECO:0000255" key="4"/>
<evidence type="ECO:0000255" key="5">
    <source>
        <dbReference type="PROSITE-ProRule" id="PRU00059"/>
    </source>
</evidence>
<evidence type="ECO:0000255" key="6">
    <source>
        <dbReference type="PROSITE-ProRule" id="PRU00124"/>
    </source>
</evidence>
<evidence type="ECO:0000255" key="7">
    <source>
        <dbReference type="PROSITE-ProRule" id="PRU00188"/>
    </source>
</evidence>
<evidence type="ECO:0000255" key="8">
    <source>
        <dbReference type="PROSITE-ProRule" id="PRU00274"/>
    </source>
</evidence>
<evidence type="ECO:0000256" key="9">
    <source>
        <dbReference type="SAM" id="MobiDB-lite"/>
    </source>
</evidence>
<evidence type="ECO:0000305" key="10"/>
<sequence>MKSERARRGAGGSGDLGAGFKYTSRPENMNGCEEGVEFLPANNSSKVEKGGPRRWVVLMAVLAAFLALSLLAGLLAWHFQDRNVRVQKIFNGYLSVRNENFLDAYENSNSTEFANLAKKVKEALKFLYSGIPVLGPYHKTSTVTAFSEGSVIAYYWSEFDIPKHLVKEAEQAMAEKRMVTVPPRARSMSSFVMTSVVAFPSDPRIIQNTQDNSCSFALHAQGSEPIRFSTPGFPDSPYPSHARCQWTLRGDADSVLSLTFRSFDVATCDERGSDLVTVYDTLSPVEPRAVVQLCGTYPPSYNLTFLSSQNVLLITLVTSTERRHPGFEAVFFQLPRMSSCGGYLRAAQGTFNSPYYPGHYPPNINCTWHIEVPDNKNVKVRFKAFFLQEPNVPVGSCTKDYVEINGEKYCGERPQFVASSRNNKITVHFHSDQSYTDTGFLAEFLSFDARDPCPGSFMCNTGRCIRKELRCDGWADCTDYSDELDCKCNATYQFTCRDKFCKPLFWVCDSVKDCEDGSDEEGCSCPPNTFKCGNGKCLPQSQQCDRKDDCGDGSDEAKCQDGKAVPCTEHTHRCLNGLCVDKSNPQCDGNEDCTDGSDEKDCDCGRRSFTRQSRVVGGENSDQGEWPWQVSLHAQGHGHLCGASLISPSWMISAAHCFVDDRGFRYSEHSVWTAFLGLHDQSKRNAPGVQERGLQRIIKHPFFNDFTFDYDIALLQLDRPVEYSATIRPICLPAADYTFPTGKAIWVTGWGHTQEAGQGAMILQKGEIRVINQTTCEHLLPQQITPRMICVGYLSGGVDACQGDSGGPLSSPEEDGRMFQAGVVSWGEGCAQRNKPGVYTRLPVFRDWIKAQIGV</sequence>
<organism>
    <name type="scientific">Bos taurus</name>
    <name type="common">Bovine</name>
    <dbReference type="NCBI Taxonomy" id="9913"/>
    <lineage>
        <taxon>Eukaryota</taxon>
        <taxon>Metazoa</taxon>
        <taxon>Chordata</taxon>
        <taxon>Craniata</taxon>
        <taxon>Vertebrata</taxon>
        <taxon>Euteleostomi</taxon>
        <taxon>Mammalia</taxon>
        <taxon>Eutheria</taxon>
        <taxon>Laurasiatheria</taxon>
        <taxon>Artiodactyla</taxon>
        <taxon>Ruminantia</taxon>
        <taxon>Pecora</taxon>
        <taxon>Bovidae</taxon>
        <taxon>Bovinae</taxon>
        <taxon>Bos</taxon>
    </lineage>
</organism>
<feature type="chain" id="PRO_0000285891" description="Suppressor of tumorigenicity 14 protein homolog">
    <location>
        <begin position="1"/>
        <end position="855"/>
    </location>
</feature>
<feature type="topological domain" description="Cytoplasmic" evidence="4">
    <location>
        <begin position="1"/>
        <end position="55"/>
    </location>
</feature>
<feature type="transmembrane region" description="Helical; Signal-anchor for type II membrane protein" evidence="4">
    <location>
        <begin position="56"/>
        <end position="76"/>
    </location>
</feature>
<feature type="topological domain" description="Extracellular" evidence="4">
    <location>
        <begin position="77"/>
        <end position="855"/>
    </location>
</feature>
<feature type="domain" description="SEA" evidence="7">
    <location>
        <begin position="86"/>
        <end position="203"/>
    </location>
</feature>
<feature type="domain" description="CUB 1" evidence="5">
    <location>
        <begin position="214"/>
        <end position="334"/>
    </location>
</feature>
<feature type="domain" description="CUB 2" evidence="5">
    <location>
        <begin position="340"/>
        <end position="447"/>
    </location>
</feature>
<feature type="domain" description="LDL-receptor class A 1" evidence="6">
    <location>
        <begin position="452"/>
        <end position="487"/>
    </location>
</feature>
<feature type="domain" description="LDL-receptor class A 2" evidence="6">
    <location>
        <begin position="487"/>
        <end position="524"/>
    </location>
</feature>
<feature type="domain" description="LDL-receptor class A 3" evidence="6">
    <location>
        <begin position="524"/>
        <end position="560"/>
    </location>
</feature>
<feature type="domain" description="LDL-receptor class A 4" evidence="6">
    <location>
        <begin position="566"/>
        <end position="603"/>
    </location>
</feature>
<feature type="domain" description="Peptidase S1" evidence="8">
    <location>
        <begin position="615"/>
        <end position="854"/>
    </location>
</feature>
<feature type="region of interest" description="Disordered" evidence="9">
    <location>
        <begin position="1"/>
        <end position="21"/>
    </location>
</feature>
<feature type="active site" description="Charge relay system" evidence="1">
    <location>
        <position position="656"/>
    </location>
</feature>
<feature type="active site" description="Charge relay system" evidence="1">
    <location>
        <position position="711"/>
    </location>
</feature>
<feature type="active site" description="Charge relay system" evidence="1">
    <location>
        <position position="805"/>
    </location>
</feature>
<feature type="modified residue" description="Phosphoserine" evidence="2">
    <location>
        <position position="13"/>
    </location>
</feature>
<feature type="glycosylation site" description="N-linked (GlcNAc...) asparagine" evidence="4">
    <location>
        <position position="109"/>
    </location>
</feature>
<feature type="glycosylation site" description="N-linked (GlcNAc...) asparagine" evidence="4">
    <location>
        <position position="302"/>
    </location>
</feature>
<feature type="glycosylation site" description="N-linked (GlcNAc...) asparagine" evidence="4">
    <location>
        <position position="365"/>
    </location>
</feature>
<feature type="glycosylation site" description="N-linked (GlcNAc...) asparagine" evidence="4">
    <location>
        <position position="489"/>
    </location>
</feature>
<feature type="glycosylation site" description="N-linked (GlcNAc...) asparagine" evidence="4">
    <location>
        <position position="772"/>
    </location>
</feature>
<feature type="disulfide bond" evidence="1">
    <location>
        <begin position="214"/>
        <end position="244"/>
    </location>
</feature>
<feature type="disulfide bond" evidence="1">
    <location>
        <begin position="340"/>
        <end position="366"/>
    </location>
</feature>
<feature type="disulfide bond" evidence="1">
    <location>
        <begin position="397"/>
        <end position="410"/>
    </location>
</feature>
<feature type="disulfide bond" evidence="1">
    <location>
        <begin position="453"/>
        <end position="464"/>
    </location>
</feature>
<feature type="disulfide bond" evidence="1">
    <location>
        <begin position="459"/>
        <end position="477"/>
    </location>
</feature>
<feature type="disulfide bond" evidence="1">
    <location>
        <begin position="471"/>
        <end position="486"/>
    </location>
</feature>
<feature type="disulfide bond" evidence="1">
    <location>
        <begin position="488"/>
        <end position="501"/>
    </location>
</feature>
<feature type="disulfide bond" evidence="1">
    <location>
        <begin position="496"/>
        <end position="514"/>
    </location>
</feature>
<feature type="disulfide bond" evidence="1">
    <location>
        <begin position="508"/>
        <end position="523"/>
    </location>
</feature>
<feature type="disulfide bond" evidence="1">
    <location>
        <begin position="525"/>
        <end position="537"/>
    </location>
</feature>
<feature type="disulfide bond" evidence="1">
    <location>
        <begin position="532"/>
        <end position="550"/>
    </location>
</feature>
<feature type="disulfide bond" evidence="1">
    <location>
        <begin position="544"/>
        <end position="559"/>
    </location>
</feature>
<feature type="disulfide bond" evidence="1">
    <location>
        <begin position="567"/>
        <end position="579"/>
    </location>
</feature>
<feature type="disulfide bond" evidence="1">
    <location>
        <begin position="574"/>
        <end position="593"/>
    </location>
</feature>
<feature type="disulfide bond" evidence="1">
    <location>
        <begin position="587"/>
        <end position="602"/>
    </location>
</feature>
<feature type="disulfide bond" evidence="1">
    <location>
        <begin position="641"/>
        <end position="657"/>
    </location>
</feature>
<feature type="disulfide bond" evidence="1">
    <location>
        <begin position="776"/>
        <end position="790"/>
    </location>
</feature>
<feature type="disulfide bond" evidence="1">
    <location>
        <begin position="801"/>
        <end position="830"/>
    </location>
</feature>
<protein>
    <recommendedName>
        <fullName>Suppressor of tumorigenicity 14 protein homolog</fullName>
        <ecNumber>3.4.21.109</ecNumber>
    </recommendedName>
    <alternativeName>
        <fullName>Serine protease 14</fullName>
    </alternativeName>
</protein>
<reference key="1">
    <citation type="submission" date="2006-08" db="EMBL/GenBank/DDBJ databases">
        <authorList>
            <consortium name="NIH - Mammalian Gene Collection (MGC) project"/>
        </authorList>
    </citation>
    <scope>NUCLEOTIDE SEQUENCE [LARGE SCALE MRNA]</scope>
    <source>
        <strain>Hereford</strain>
        <tissue>Fetal skin</tissue>
    </source>
</reference>
<keyword id="KW-1015">Disulfide bond</keyword>
<keyword id="KW-0325">Glycoprotein</keyword>
<keyword id="KW-0378">Hydrolase</keyword>
<keyword id="KW-0472">Membrane</keyword>
<keyword id="KW-0597">Phosphoprotein</keyword>
<keyword id="KW-0645">Protease</keyword>
<keyword id="KW-1185">Reference proteome</keyword>
<keyword id="KW-0677">Repeat</keyword>
<keyword id="KW-0720">Serine protease</keyword>
<keyword id="KW-0735">Signal-anchor</keyword>
<keyword id="KW-0812">Transmembrane</keyword>
<keyword id="KW-1133">Transmembrane helix</keyword>
<dbReference type="EC" id="3.4.21.109"/>
<dbReference type="EMBL" id="BC122638">
    <property type="protein sequence ID" value="AAI22639.1"/>
    <property type="molecule type" value="mRNA"/>
</dbReference>
<dbReference type="RefSeq" id="NP_001070006.1">
    <property type="nucleotide sequence ID" value="NM_001076538.1"/>
</dbReference>
<dbReference type="SMR" id="Q0IIH7"/>
<dbReference type="FunCoup" id="Q0IIH7">
    <property type="interactions" value="139"/>
</dbReference>
<dbReference type="STRING" id="9913.ENSBTAP00000026272"/>
<dbReference type="MEROPS" id="S01.302"/>
<dbReference type="GlyCosmos" id="Q0IIH7">
    <property type="glycosylation" value="5 sites, No reported glycans"/>
</dbReference>
<dbReference type="GlyGen" id="Q0IIH7">
    <property type="glycosylation" value="5 sites"/>
</dbReference>
<dbReference type="GeneID" id="767617"/>
<dbReference type="KEGG" id="bta:767617"/>
<dbReference type="CTD" id="6768"/>
<dbReference type="InParanoid" id="Q0IIH7"/>
<dbReference type="OrthoDB" id="6380398at2759"/>
<dbReference type="Proteomes" id="UP000009136">
    <property type="component" value="Unplaced"/>
</dbReference>
<dbReference type="GO" id="GO:0016020">
    <property type="term" value="C:membrane"/>
    <property type="evidence" value="ECO:0007669"/>
    <property type="project" value="UniProtKB-SubCell"/>
</dbReference>
<dbReference type="GO" id="GO:0004252">
    <property type="term" value="F:serine-type endopeptidase activity"/>
    <property type="evidence" value="ECO:0007669"/>
    <property type="project" value="InterPro"/>
</dbReference>
<dbReference type="GO" id="GO:0030216">
    <property type="term" value="P:keratinocyte differentiation"/>
    <property type="evidence" value="ECO:0000250"/>
    <property type="project" value="UniProtKB"/>
</dbReference>
<dbReference type="GO" id="GO:0006508">
    <property type="term" value="P:proteolysis"/>
    <property type="evidence" value="ECO:0007669"/>
    <property type="project" value="UniProtKB-KW"/>
</dbReference>
<dbReference type="CDD" id="cd00041">
    <property type="entry name" value="CUB"/>
    <property type="match status" value="2"/>
</dbReference>
<dbReference type="CDD" id="cd00112">
    <property type="entry name" value="LDLa"/>
    <property type="match status" value="4"/>
</dbReference>
<dbReference type="CDD" id="cd00190">
    <property type="entry name" value="Tryp_SPc"/>
    <property type="match status" value="1"/>
</dbReference>
<dbReference type="FunFam" id="2.60.120.290:FF:000032">
    <property type="entry name" value="Suppressor of tumorigenicity 14 protein homolog"/>
    <property type="match status" value="1"/>
</dbReference>
<dbReference type="FunFam" id="2.60.120.290:FF:000036">
    <property type="entry name" value="Suppressor of tumorigenicity 14 protein homolog"/>
    <property type="match status" value="1"/>
</dbReference>
<dbReference type="FunFam" id="3.30.70.960:FF:000006">
    <property type="entry name" value="Suppressor of tumorigenicity 14 protein homolog"/>
    <property type="match status" value="1"/>
</dbReference>
<dbReference type="FunFam" id="4.10.400.10:FF:000114">
    <property type="entry name" value="Suppressor of tumorigenicity 14 protein homolog"/>
    <property type="match status" value="1"/>
</dbReference>
<dbReference type="FunFam" id="4.10.400.10:FF:000117">
    <property type="entry name" value="Suppressor of tumorigenicity 14 protein homolog"/>
    <property type="match status" value="1"/>
</dbReference>
<dbReference type="FunFam" id="4.10.400.10:FF:000119">
    <property type="entry name" value="Suppressor of tumorigenicity 14 protein homolog"/>
    <property type="match status" value="1"/>
</dbReference>
<dbReference type="FunFam" id="2.40.10.10:FF:000003">
    <property type="entry name" value="Transmembrane serine protease 3"/>
    <property type="match status" value="1"/>
</dbReference>
<dbReference type="Gene3D" id="4.10.400.10">
    <property type="entry name" value="Low-density Lipoprotein Receptor"/>
    <property type="match status" value="4"/>
</dbReference>
<dbReference type="Gene3D" id="3.30.70.960">
    <property type="entry name" value="SEA domain"/>
    <property type="match status" value="1"/>
</dbReference>
<dbReference type="Gene3D" id="2.60.120.290">
    <property type="entry name" value="Spermadhesin, CUB domain"/>
    <property type="match status" value="2"/>
</dbReference>
<dbReference type="Gene3D" id="2.40.10.10">
    <property type="entry name" value="Trypsin-like serine proteases"/>
    <property type="match status" value="2"/>
</dbReference>
<dbReference type="InterPro" id="IPR000859">
    <property type="entry name" value="CUB_dom"/>
</dbReference>
<dbReference type="InterPro" id="IPR036055">
    <property type="entry name" value="LDL_receptor-like_sf"/>
</dbReference>
<dbReference type="InterPro" id="IPR023415">
    <property type="entry name" value="LDLR_class-A_CS"/>
</dbReference>
<dbReference type="InterPro" id="IPR002172">
    <property type="entry name" value="LDrepeatLR_classA_rpt"/>
</dbReference>
<dbReference type="InterPro" id="IPR009003">
    <property type="entry name" value="Peptidase_S1_PA"/>
</dbReference>
<dbReference type="InterPro" id="IPR043504">
    <property type="entry name" value="Peptidase_S1_PA_chymotrypsin"/>
</dbReference>
<dbReference type="InterPro" id="IPR017051">
    <property type="entry name" value="Peptidase_S1A_matripase"/>
</dbReference>
<dbReference type="InterPro" id="IPR000082">
    <property type="entry name" value="SEA_dom"/>
</dbReference>
<dbReference type="InterPro" id="IPR036364">
    <property type="entry name" value="SEA_dom_sf"/>
</dbReference>
<dbReference type="InterPro" id="IPR035914">
    <property type="entry name" value="Sperma_CUB_dom_sf"/>
</dbReference>
<dbReference type="InterPro" id="IPR001254">
    <property type="entry name" value="Trypsin_dom"/>
</dbReference>
<dbReference type="InterPro" id="IPR018114">
    <property type="entry name" value="TRYPSIN_HIS"/>
</dbReference>
<dbReference type="InterPro" id="IPR033116">
    <property type="entry name" value="TRYPSIN_SER"/>
</dbReference>
<dbReference type="PANTHER" id="PTHR24252">
    <property type="entry name" value="ACROSIN-RELATED"/>
    <property type="match status" value="1"/>
</dbReference>
<dbReference type="PANTHER" id="PTHR24252:SF17">
    <property type="entry name" value="SUPPRESSOR OF TUMORIGENICITY 14 PROTEIN HOMOLOG-RELATED"/>
    <property type="match status" value="1"/>
</dbReference>
<dbReference type="Pfam" id="PF00431">
    <property type="entry name" value="CUB"/>
    <property type="match status" value="2"/>
</dbReference>
<dbReference type="Pfam" id="PF00057">
    <property type="entry name" value="Ldl_recept_a"/>
    <property type="match status" value="4"/>
</dbReference>
<dbReference type="Pfam" id="PF01390">
    <property type="entry name" value="SEA"/>
    <property type="match status" value="1"/>
</dbReference>
<dbReference type="Pfam" id="PF00089">
    <property type="entry name" value="Trypsin"/>
    <property type="match status" value="1"/>
</dbReference>
<dbReference type="PIRSF" id="PIRSF036370">
    <property type="entry name" value="ST14"/>
    <property type="match status" value="1"/>
</dbReference>
<dbReference type="PRINTS" id="PR00261">
    <property type="entry name" value="LDLRECEPTOR"/>
</dbReference>
<dbReference type="SMART" id="SM00042">
    <property type="entry name" value="CUB"/>
    <property type="match status" value="2"/>
</dbReference>
<dbReference type="SMART" id="SM00192">
    <property type="entry name" value="LDLa"/>
    <property type="match status" value="4"/>
</dbReference>
<dbReference type="SMART" id="SM00020">
    <property type="entry name" value="Tryp_SPc"/>
    <property type="match status" value="1"/>
</dbReference>
<dbReference type="SUPFAM" id="SSF57424">
    <property type="entry name" value="LDL receptor-like module"/>
    <property type="match status" value="4"/>
</dbReference>
<dbReference type="SUPFAM" id="SSF82671">
    <property type="entry name" value="SEA domain"/>
    <property type="match status" value="1"/>
</dbReference>
<dbReference type="SUPFAM" id="SSF49854">
    <property type="entry name" value="Spermadhesin, CUB domain"/>
    <property type="match status" value="2"/>
</dbReference>
<dbReference type="SUPFAM" id="SSF50494">
    <property type="entry name" value="Trypsin-like serine proteases"/>
    <property type="match status" value="1"/>
</dbReference>
<dbReference type="PROSITE" id="PS01180">
    <property type="entry name" value="CUB"/>
    <property type="match status" value="2"/>
</dbReference>
<dbReference type="PROSITE" id="PS01209">
    <property type="entry name" value="LDLRA_1"/>
    <property type="match status" value="3"/>
</dbReference>
<dbReference type="PROSITE" id="PS50068">
    <property type="entry name" value="LDLRA_2"/>
    <property type="match status" value="4"/>
</dbReference>
<dbReference type="PROSITE" id="PS50024">
    <property type="entry name" value="SEA"/>
    <property type="match status" value="1"/>
</dbReference>
<dbReference type="PROSITE" id="PS50240">
    <property type="entry name" value="TRYPSIN_DOM"/>
    <property type="match status" value="1"/>
</dbReference>
<dbReference type="PROSITE" id="PS00134">
    <property type="entry name" value="TRYPSIN_HIS"/>
    <property type="match status" value="1"/>
</dbReference>
<dbReference type="PROSITE" id="PS00135">
    <property type="entry name" value="TRYPSIN_SER"/>
    <property type="match status" value="1"/>
</dbReference>
<gene>
    <name type="primary">ST14</name>
    <name type="synonym">PRSS14</name>
</gene>
<name>ST14_BOVIN</name>
<accession>Q0IIH7</accession>